<gene>
    <name type="ordered locus">RC0786</name>
</gene>
<proteinExistence type="predicted"/>
<protein>
    <recommendedName>
        <fullName>Uncharacterized protein RC0786</fullName>
    </recommendedName>
</protein>
<reference key="1">
    <citation type="journal article" date="2001" name="Science">
        <title>Mechanisms of evolution in Rickettsia conorii and R. prowazekii.</title>
        <authorList>
            <person name="Ogata H."/>
            <person name="Audic S."/>
            <person name="Renesto-Audiffren P."/>
            <person name="Fournier P.-E."/>
            <person name="Barbe V."/>
            <person name="Samson D."/>
            <person name="Roux V."/>
            <person name="Cossart P."/>
            <person name="Weissenbach J."/>
            <person name="Claverie J.-M."/>
            <person name="Raoult D."/>
        </authorList>
    </citation>
    <scope>NUCLEOTIDE SEQUENCE [LARGE SCALE GENOMIC DNA]</scope>
    <source>
        <strain>ATCC VR-613 / Malish 7</strain>
    </source>
</reference>
<name>Y786_RICCN</name>
<feature type="chain" id="PRO_0000279870" description="Uncharacterized protein RC0786">
    <location>
        <begin position="1"/>
        <end position="83"/>
    </location>
</feature>
<organism>
    <name type="scientific">Rickettsia conorii (strain ATCC VR-613 / Malish 7)</name>
    <dbReference type="NCBI Taxonomy" id="272944"/>
    <lineage>
        <taxon>Bacteria</taxon>
        <taxon>Pseudomonadati</taxon>
        <taxon>Pseudomonadota</taxon>
        <taxon>Alphaproteobacteria</taxon>
        <taxon>Rickettsiales</taxon>
        <taxon>Rickettsiaceae</taxon>
        <taxon>Rickettsieae</taxon>
        <taxon>Rickettsia</taxon>
        <taxon>spotted fever group</taxon>
    </lineage>
</organism>
<sequence length="83" mass="9856">MIYGIKLLNMNILYLIERRCADNIVSIIINNIHKKVSKTLEEKWTIKNSKIEYCHVQSAVSSTFFDLFLGIRDEYFERIMPLE</sequence>
<dbReference type="EMBL" id="AE006914">
    <property type="protein sequence ID" value="AAL03324.1"/>
    <property type="molecule type" value="Genomic_DNA"/>
</dbReference>
<dbReference type="PIR" id="B97798">
    <property type="entry name" value="B97798"/>
</dbReference>
<dbReference type="SMR" id="Q92HI5"/>
<dbReference type="KEGG" id="rco:RC0786"/>
<dbReference type="HOGENOM" id="CLU_2685489_0_0_5"/>
<dbReference type="Proteomes" id="UP000000816">
    <property type="component" value="Chromosome"/>
</dbReference>
<accession>Q92HI5</accession>